<gene>
    <name evidence="12 15" type="primary">RUSC2</name>
    <name evidence="13" type="synonym">KIAA0375</name>
</gene>
<sequence>MDSPPKLTGETLIVHHIPLVHCQVPDRQCCGGAGGGGGSTRPNPFCPPELGITQPDQDLGQADSLLFSSLHSTPGGTARSIDSTKSRSRDGRGPGAPKRHNPFLLQEGVGEPGLGDLYDDSIGDSATQQSFHLHGTGQPNFHLSSFQLPPSGPRVGRPWGTTRSRAGVVEGQEQEPVMTLDTQQCGTSHCCRPELEAETMELDECGGPGGSGSGGGASDTSGFSFDQEWKLSSDESPRNPGCSGSGDQHCRCSSTSSQSEAADQSMGYVSDSSCNSSDGVLVTFSTLYNKMHGTPRANLNSAPQSCSDSSFCSHSDPGAFYLDLQPSPFESKMSYESHHPESGGREGGYGCPHASSPELDANCNSYRPHCEPCPAVADLTACFQSQARLVVATQNYYKLVTCDLSSQSSPSPAGSSITSCSEEHTKISPPPGPGPDPGPSQPSEYYLFQKPEVQPEEQEAVSSSTQAAAAVGPTVLEGQVYTNTSPPNLSTGRQRSRSYDRSLQRSPPVRLGSLERMLSCPVRLSEGPAAMAGPGSPPRRVTSFAELAKGRKKTGGSGSPPLRVSVGDSSQEFSPIQEAQQDRGAPLDEGTCCSHSLPPMPLGPGMDLLGPDPSPPWSTQVCQGPHSSEMPPAGLRATGQGPLAQLMDPGPALPGSPANSHTQRDARARADGGGTESRPVLRYSKEQRPTTLPIQPFVFQHHFPKQLAKARALHSLSQLYSLSGCSRTQQPAPLAAPAAQVSVPAPSGEPQASTPRATGRGARKAGSEPETSRPSPLGSYSPIRSVGPFGPSTDSSASTSCSPPPEQPTATESLPPWSHSCPSAVRPATSQQPQKEDQKILTLTEYRLHGTGSLPPLGSWRSGLSRAESLARGGGEGSMATRPSNANHLSPQALKWREYRRKNPLGPPGLSGSLDRRSQEARLARRNPIFEFPGSLSAASHLNCRLNGQAVKPLPLTCPDFQDPFSLTEKPPAEFCLSPDGSSEAISIDLLQKKGLVKAVNIAVDLIVAHFGTSRDPGVKAKLGNSSVSPNVGHLVLKYLCPAVRAVLEDGLKAFVLDVIIGQRKNMPWSVVEASTQLGPSTKVLHGLYNKVSQFPELTSHTMRFNAFILGLLNIRSLEFWFNHLYNHEDIIQTHYQPWGFLSAAHTVCPGLFEELLLLLQPLALLPFSLDLLFQHRLLQSGQQQRQHKELLRVSQDLLLSAHSTLQLARARGQEGPGDVDRAAQGERVKGVGASEGGEEEEEEEETEEVAEAAGGSGRARWARGGQAGWWYQLMQSSQVYIDGSIEGSRFPRGSSNSSSEKKKGAGGGGPPQAPPPREGVVEGAEACPASEEALGRERGWPFWMGSPPDSVLAELRRSREREGPAASPAENEEGASEPSPGGIKWGHLFGSRKAQREARPTNRLPSDWLSLDKSMFQLVAQTVGSRREPEPKESLQEPHSPALPSSPPCEVQALCHHLATGPGQLSFHKGDILRVLGRAGGDWLRCSRGPDSGLVPLAYVTLTPTPSPTPGSSQN</sequence>
<dbReference type="EMBL" id="AB002373">
    <property type="protein sequence ID" value="BAA20830.2"/>
    <property type="status" value="ALT_INIT"/>
    <property type="molecule type" value="mRNA"/>
</dbReference>
<dbReference type="EMBL" id="AL133476">
    <property type="status" value="NOT_ANNOTATED_CDS"/>
    <property type="molecule type" value="Genomic_DNA"/>
</dbReference>
<dbReference type="EMBL" id="CH471071">
    <property type="protein sequence ID" value="EAW58377.1"/>
    <property type="molecule type" value="Genomic_DNA"/>
</dbReference>
<dbReference type="EMBL" id="BC029647">
    <property type="protein sequence ID" value="AAH29647.1"/>
    <property type="molecule type" value="mRNA"/>
</dbReference>
<dbReference type="EMBL" id="BC064843">
    <property type="protein sequence ID" value="AAH64843.1"/>
    <property type="molecule type" value="mRNA"/>
</dbReference>
<dbReference type="EMBL" id="BC082245">
    <property type="protein sequence ID" value="AAH82245.1"/>
    <property type="molecule type" value="mRNA"/>
</dbReference>
<dbReference type="EMBL" id="BC132766">
    <property type="protein sequence ID" value="AAI32767.1"/>
    <property type="molecule type" value="mRNA"/>
</dbReference>
<dbReference type="EMBL" id="BC132770">
    <property type="protein sequence ID" value="AAI32771.1"/>
    <property type="molecule type" value="mRNA"/>
</dbReference>
<dbReference type="EMBL" id="BC146654">
    <property type="protein sequence ID" value="AAI46655.1"/>
    <property type="molecule type" value="mRNA"/>
</dbReference>
<dbReference type="EMBL" id="BC150262">
    <property type="protein sequence ID" value="AAI50263.1"/>
    <property type="molecule type" value="mRNA"/>
</dbReference>
<dbReference type="CCDS" id="CCDS35008.1"/>
<dbReference type="RefSeq" id="NP_001129471.2">
    <property type="nucleotide sequence ID" value="NM_001135999.2"/>
</dbReference>
<dbReference type="RefSeq" id="NP_055621.2">
    <property type="nucleotide sequence ID" value="NM_014806.5"/>
</dbReference>
<dbReference type="RefSeq" id="XP_047280163.1">
    <property type="nucleotide sequence ID" value="XM_047424207.1"/>
</dbReference>
<dbReference type="RefSeq" id="XP_047280164.1">
    <property type="nucleotide sequence ID" value="XM_047424208.1"/>
</dbReference>
<dbReference type="PDB" id="6IF2">
    <property type="method" value="X-ray"/>
    <property type="resolution" value="2.40 A"/>
    <property type="chains" value="A=983-1181"/>
</dbReference>
<dbReference type="PDBsum" id="6IF2"/>
<dbReference type="SMR" id="Q8N2Y8"/>
<dbReference type="BioGRID" id="115187">
    <property type="interactions" value="42"/>
</dbReference>
<dbReference type="ELM" id="Q8N2Y8"/>
<dbReference type="FunCoup" id="Q8N2Y8">
    <property type="interactions" value="414"/>
</dbReference>
<dbReference type="IntAct" id="Q8N2Y8">
    <property type="interactions" value="35"/>
</dbReference>
<dbReference type="MINT" id="Q8N2Y8"/>
<dbReference type="STRING" id="9606.ENSP00000393922"/>
<dbReference type="TCDB" id="8.A.189.1.1">
    <property type="family name" value="the ap-4 complex accessory subunit rusc2 (rusc2) family"/>
</dbReference>
<dbReference type="GlyGen" id="Q8N2Y8">
    <property type="glycosylation" value="5 sites, 1 O-linked glycan (2 sites)"/>
</dbReference>
<dbReference type="iPTMnet" id="Q8N2Y8"/>
<dbReference type="PhosphoSitePlus" id="Q8N2Y8"/>
<dbReference type="BioMuta" id="RUSC2"/>
<dbReference type="DMDM" id="317373513"/>
<dbReference type="jPOST" id="Q8N2Y8"/>
<dbReference type="MassIVE" id="Q8N2Y8"/>
<dbReference type="PaxDb" id="9606-ENSP00000393922"/>
<dbReference type="PeptideAtlas" id="Q8N2Y8"/>
<dbReference type="ProteomicsDB" id="71741"/>
<dbReference type="Pumba" id="Q8N2Y8"/>
<dbReference type="Antibodypedia" id="11549">
    <property type="antibodies" value="128 antibodies from 21 providers"/>
</dbReference>
<dbReference type="DNASU" id="9853"/>
<dbReference type="Ensembl" id="ENST00000361226.8">
    <property type="protein sequence ID" value="ENSP00000355177.3"/>
    <property type="gene ID" value="ENSG00000198853.12"/>
</dbReference>
<dbReference type="Ensembl" id="ENST00000455600.1">
    <property type="protein sequence ID" value="ENSP00000393922.1"/>
    <property type="gene ID" value="ENSG00000198853.12"/>
</dbReference>
<dbReference type="GeneID" id="9853"/>
<dbReference type="KEGG" id="hsa:9853"/>
<dbReference type="MANE-Select" id="ENST00000361226.8">
    <property type="protein sequence ID" value="ENSP00000355177.3"/>
    <property type="RefSeq nucleotide sequence ID" value="NM_014806.5"/>
    <property type="RefSeq protein sequence ID" value="NP_055621.2"/>
</dbReference>
<dbReference type="UCSC" id="uc003zww.4">
    <property type="organism name" value="human"/>
</dbReference>
<dbReference type="AGR" id="HGNC:23625"/>
<dbReference type="CTD" id="9853"/>
<dbReference type="DisGeNET" id="9853"/>
<dbReference type="GeneCards" id="RUSC2"/>
<dbReference type="HGNC" id="HGNC:23625">
    <property type="gene designation" value="RUSC2"/>
</dbReference>
<dbReference type="HPA" id="ENSG00000198853">
    <property type="expression patterns" value="Low tissue specificity"/>
</dbReference>
<dbReference type="MalaCards" id="RUSC2"/>
<dbReference type="MIM" id="611053">
    <property type="type" value="gene"/>
</dbReference>
<dbReference type="MIM" id="617773">
    <property type="type" value="phenotype"/>
</dbReference>
<dbReference type="neXtProt" id="NX_Q8N2Y8"/>
<dbReference type="OpenTargets" id="ENSG00000198853"/>
<dbReference type="PharmGKB" id="PA134956488"/>
<dbReference type="VEuPathDB" id="HostDB:ENSG00000198853"/>
<dbReference type="eggNOG" id="ENOG502QR1I">
    <property type="taxonomic scope" value="Eukaryota"/>
</dbReference>
<dbReference type="GeneTree" id="ENSGT00900000141033"/>
<dbReference type="HOGENOM" id="CLU_004141_0_0_1"/>
<dbReference type="InParanoid" id="Q8N2Y8"/>
<dbReference type="OMA" id="FDHEWKL"/>
<dbReference type="OrthoDB" id="9884296at2759"/>
<dbReference type="PAN-GO" id="Q8N2Y8">
    <property type="GO annotations" value="1 GO annotation based on evolutionary models"/>
</dbReference>
<dbReference type="PhylomeDB" id="Q8N2Y8"/>
<dbReference type="TreeFam" id="TF332235"/>
<dbReference type="PathwayCommons" id="Q8N2Y8"/>
<dbReference type="SignaLink" id="Q8N2Y8"/>
<dbReference type="BioGRID-ORCS" id="9853">
    <property type="hits" value="14 hits in 1156 CRISPR screens"/>
</dbReference>
<dbReference type="ChiTaRS" id="RUSC2">
    <property type="organism name" value="human"/>
</dbReference>
<dbReference type="GenomeRNAi" id="9853"/>
<dbReference type="Pharos" id="Q8N2Y8">
    <property type="development level" value="Tbio"/>
</dbReference>
<dbReference type="PRO" id="PR:Q8N2Y8"/>
<dbReference type="Proteomes" id="UP000005640">
    <property type="component" value="Chromosome 9"/>
</dbReference>
<dbReference type="RNAct" id="Q8N2Y8">
    <property type="molecule type" value="protein"/>
</dbReference>
<dbReference type="Bgee" id="ENSG00000198853">
    <property type="expression patterns" value="Expressed in cortical plate and 163 other cell types or tissues"/>
</dbReference>
<dbReference type="GO" id="GO:0031410">
    <property type="term" value="C:cytoplasmic vesicle"/>
    <property type="evidence" value="ECO:0000314"/>
    <property type="project" value="UniProtKB"/>
</dbReference>
<dbReference type="GO" id="GO:0005829">
    <property type="term" value="C:cytosol"/>
    <property type="evidence" value="ECO:0007669"/>
    <property type="project" value="UniProtKB-SubCell"/>
</dbReference>
<dbReference type="GO" id="GO:0070062">
    <property type="term" value="C:extracellular exosome"/>
    <property type="evidence" value="ECO:0007005"/>
    <property type="project" value="UniProtKB"/>
</dbReference>
<dbReference type="GO" id="GO:0005886">
    <property type="term" value="C:plasma membrane"/>
    <property type="evidence" value="ECO:0000314"/>
    <property type="project" value="UniProtKB"/>
</dbReference>
<dbReference type="GO" id="GO:0031267">
    <property type="term" value="F:small GTPase binding"/>
    <property type="evidence" value="ECO:0000353"/>
    <property type="project" value="UniProtKB"/>
</dbReference>
<dbReference type="CDD" id="cd17702">
    <property type="entry name" value="RUN_RUSC2"/>
    <property type="match status" value="1"/>
</dbReference>
<dbReference type="FunFam" id="1.20.58.900:FF:000006">
    <property type="entry name" value="RUN and SH3 domain containing 1"/>
    <property type="match status" value="1"/>
</dbReference>
<dbReference type="FunFam" id="2.30.30.40:FF:000228">
    <property type="entry name" value="RUN and SH3 domain containing 2"/>
    <property type="match status" value="1"/>
</dbReference>
<dbReference type="Gene3D" id="1.20.58.900">
    <property type="match status" value="1"/>
</dbReference>
<dbReference type="Gene3D" id="2.30.30.40">
    <property type="entry name" value="SH3 Domains"/>
    <property type="match status" value="1"/>
</dbReference>
<dbReference type="InterPro" id="IPR004012">
    <property type="entry name" value="Run_dom"/>
</dbReference>
<dbReference type="InterPro" id="IPR037213">
    <property type="entry name" value="Run_dom_sf"/>
</dbReference>
<dbReference type="InterPro" id="IPR047342">
    <property type="entry name" value="RUN_RUSC2"/>
</dbReference>
<dbReference type="InterPro" id="IPR047343">
    <property type="entry name" value="RUSC1_2"/>
</dbReference>
<dbReference type="InterPro" id="IPR036028">
    <property type="entry name" value="SH3-like_dom_sf"/>
</dbReference>
<dbReference type="InterPro" id="IPR001452">
    <property type="entry name" value="SH3_domain"/>
</dbReference>
<dbReference type="PANTHER" id="PTHR15591:SF14">
    <property type="entry name" value="AP-4 COMPLEX ACCESSORY SUBUNIT RUSC2"/>
    <property type="match status" value="1"/>
</dbReference>
<dbReference type="PANTHER" id="PTHR15591">
    <property type="entry name" value="RUN AND SH3 DOMAIN CONTAINING"/>
    <property type="match status" value="1"/>
</dbReference>
<dbReference type="Pfam" id="PF02759">
    <property type="entry name" value="RUN"/>
    <property type="match status" value="1"/>
</dbReference>
<dbReference type="Pfam" id="PF07653">
    <property type="entry name" value="SH3_2"/>
    <property type="match status" value="1"/>
</dbReference>
<dbReference type="SMART" id="SM00593">
    <property type="entry name" value="RUN"/>
    <property type="match status" value="1"/>
</dbReference>
<dbReference type="SMART" id="SM00326">
    <property type="entry name" value="SH3"/>
    <property type="match status" value="1"/>
</dbReference>
<dbReference type="SUPFAM" id="SSF140741">
    <property type="entry name" value="RUN domain-like"/>
    <property type="match status" value="1"/>
</dbReference>
<dbReference type="SUPFAM" id="SSF50044">
    <property type="entry name" value="SH3-domain"/>
    <property type="match status" value="1"/>
</dbReference>
<dbReference type="PROSITE" id="PS50826">
    <property type="entry name" value="RUN"/>
    <property type="match status" value="1"/>
</dbReference>
<dbReference type="PROSITE" id="PS50002">
    <property type="entry name" value="SH3"/>
    <property type="match status" value="1"/>
</dbReference>
<protein>
    <recommendedName>
        <fullName evidence="14">AP-4 complex accessory subunit RUSC2</fullName>
    </recommendedName>
    <alternativeName>
        <fullName evidence="11">Interacting protein of Rab1</fullName>
        <shortName evidence="11">Iporin</shortName>
    </alternativeName>
    <alternativeName>
        <fullName>RUN and SH3 domain-containing protein 2</fullName>
    </alternativeName>
</protein>
<feature type="chain" id="PRO_0000097534" description="AP-4 complex accessory subunit RUSC2">
    <location>
        <begin position="1"/>
        <end position="1516"/>
    </location>
</feature>
<feature type="domain" description="RUN" evidence="1">
    <location>
        <begin position="1031"/>
        <end position="1175"/>
    </location>
</feature>
<feature type="domain" description="SH3" evidence="2">
    <location>
        <begin position="1447"/>
        <end position="1506"/>
    </location>
</feature>
<feature type="region of interest" description="Disordered" evidence="3">
    <location>
        <begin position="33"/>
        <end position="105"/>
    </location>
</feature>
<feature type="region of interest" description="Disordered" evidence="3">
    <location>
        <begin position="202"/>
        <end position="224"/>
    </location>
</feature>
<feature type="region of interest" description="Disordered" evidence="3">
    <location>
        <begin position="229"/>
        <end position="248"/>
    </location>
</feature>
<feature type="region of interest" description="Disordered" evidence="3">
    <location>
        <begin position="331"/>
        <end position="351"/>
    </location>
</feature>
<feature type="region of interest" description="Disordered" evidence="3">
    <location>
        <begin position="404"/>
        <end position="445"/>
    </location>
</feature>
<feature type="region of interest" description="Disordered" evidence="3">
    <location>
        <begin position="478"/>
        <end position="511"/>
    </location>
</feature>
<feature type="region of interest" description="Disordered" evidence="3">
    <location>
        <begin position="550"/>
        <end position="588"/>
    </location>
</feature>
<feature type="region of interest" description="Disordered" evidence="3">
    <location>
        <begin position="646"/>
        <end position="688"/>
    </location>
</feature>
<feature type="region of interest" description="Disordered" evidence="3">
    <location>
        <begin position="727"/>
        <end position="836"/>
    </location>
</feature>
<feature type="region of interest" description="Disordered" evidence="3">
    <location>
        <begin position="868"/>
        <end position="889"/>
    </location>
</feature>
<feature type="region of interest" description="Disordered" evidence="3">
    <location>
        <begin position="1210"/>
        <end position="1261"/>
    </location>
</feature>
<feature type="region of interest" description="Disordered" evidence="3">
    <location>
        <begin position="1286"/>
        <end position="1408"/>
    </location>
</feature>
<feature type="region of interest" description="Disordered" evidence="3">
    <location>
        <begin position="1422"/>
        <end position="1449"/>
    </location>
</feature>
<feature type="compositionally biased region" description="Polar residues" evidence="3">
    <location>
        <begin position="66"/>
        <end position="81"/>
    </location>
</feature>
<feature type="compositionally biased region" description="Basic and acidic residues" evidence="3">
    <location>
        <begin position="82"/>
        <end position="92"/>
    </location>
</feature>
<feature type="compositionally biased region" description="Gly residues" evidence="3">
    <location>
        <begin position="206"/>
        <end position="217"/>
    </location>
</feature>
<feature type="compositionally biased region" description="Basic and acidic residues" evidence="3">
    <location>
        <begin position="333"/>
        <end position="344"/>
    </location>
</feature>
<feature type="compositionally biased region" description="Low complexity" evidence="3">
    <location>
        <begin position="405"/>
        <end position="420"/>
    </location>
</feature>
<feature type="compositionally biased region" description="Pro residues" evidence="3">
    <location>
        <begin position="428"/>
        <end position="440"/>
    </location>
</feature>
<feature type="compositionally biased region" description="Polar residues" evidence="3">
    <location>
        <begin position="480"/>
        <end position="493"/>
    </location>
</feature>
<feature type="compositionally biased region" description="Polar residues" evidence="3">
    <location>
        <begin position="567"/>
        <end position="579"/>
    </location>
</feature>
<feature type="compositionally biased region" description="Low complexity" evidence="3">
    <location>
        <begin position="729"/>
        <end position="746"/>
    </location>
</feature>
<feature type="compositionally biased region" description="Low complexity" evidence="3">
    <location>
        <begin position="791"/>
        <end position="801"/>
    </location>
</feature>
<feature type="compositionally biased region" description="Basic and acidic residues" evidence="3">
    <location>
        <begin position="1219"/>
        <end position="1230"/>
    </location>
</feature>
<feature type="compositionally biased region" description="Acidic residues" evidence="3">
    <location>
        <begin position="1237"/>
        <end position="1251"/>
    </location>
</feature>
<feature type="compositionally biased region" description="Basic and acidic residues" evidence="3">
    <location>
        <begin position="1355"/>
        <end position="1364"/>
    </location>
</feature>
<feature type="compositionally biased region" description="Basic and acidic residues" evidence="3">
    <location>
        <begin position="1426"/>
        <end position="1437"/>
    </location>
</feature>
<feature type="modified residue" description="Phosphoserine" evidence="16 17 18 19">
    <location>
        <position position="536"/>
    </location>
</feature>
<feature type="modified residue" description="Phosphoserine" evidence="19">
    <location>
        <position position="543"/>
    </location>
</feature>
<feature type="modified residue" description="Phosphoserine" evidence="19">
    <location>
        <position position="559"/>
    </location>
</feature>
<feature type="modified residue" description="Phosphoserine" evidence="18">
    <location>
        <position position="656"/>
    </location>
</feature>
<feature type="modified residue" description="Phosphoserine" evidence="19">
    <location>
        <position position="781"/>
    </location>
</feature>
<feature type="modified residue" description="Phosphoserine" evidence="18">
    <location>
        <position position="1368"/>
    </location>
</feature>
<feature type="modified residue" description="Phosphoserine" evidence="18">
    <location>
        <position position="1380"/>
    </location>
</feature>
<feature type="sequence variant" id="VAR_034653" description="In dbSNP:rs1535422." evidence="4 5 10">
    <original>T</original>
    <variation>A</variation>
    <location>
        <position position="73"/>
    </location>
</feature>
<feature type="sequence variant" id="VAR_034654" description="In dbSNP:rs3750427.">
    <original>P</original>
    <variation>L</variation>
    <location>
        <position position="654"/>
    </location>
</feature>
<feature type="sequence variant" id="VAR_080461" description="In MRT61; uncertain significance." evidence="7">
    <location>
        <begin position="866"/>
        <end position="1516"/>
    </location>
</feature>
<feature type="sequence variant" id="VAR_080462" description="In MRT61; uncertain significance." evidence="7">
    <location>
        <begin position="1318"/>
        <end position="1516"/>
    </location>
</feature>
<feature type="mutagenesis site" description="Decreased interaction with RAB35." evidence="9">
    <original>D</original>
    <variation>A</variation>
    <location>
        <position position="1005"/>
    </location>
</feature>
<feature type="mutagenesis site" description="Strong decrease in interaction with RAB35." evidence="9">
    <original>R</original>
    <variation>K</variation>
    <location>
        <position position="1015"/>
    </location>
</feature>
<feature type="mutagenesis site" description="Loss of interaction with RAB35." evidence="9">
    <original>E</original>
    <variation>A</variation>
    <location>
        <position position="1119"/>
    </location>
</feature>
<feature type="mutagenesis site" description="Loss of interaction with RAB35." evidence="9">
    <original>E</original>
    <variation>K</variation>
    <location>
        <position position="1119"/>
    </location>
</feature>
<feature type="mutagenesis site" description="Loss of interaction with RAB35." evidence="9">
    <original>E</original>
    <variation>A</variation>
    <location>
        <position position="1155"/>
    </location>
</feature>
<feature type="mutagenesis site" description="Loss of interaction with RAB35." evidence="9">
    <original>L</original>
    <variation>A</variation>
    <location>
        <position position="1158"/>
    </location>
</feature>
<feature type="mutagenesis site" description="Decreased interaction with RAB35." evidence="9">
    <original>Q</original>
    <variation>A</variation>
    <location>
        <position position="1161"/>
    </location>
</feature>
<feature type="helix" evidence="20">
    <location>
        <begin position="990"/>
        <end position="1010"/>
    </location>
</feature>
<feature type="helix" evidence="20">
    <location>
        <begin position="1017"/>
        <end position="1023"/>
    </location>
</feature>
<feature type="turn" evidence="20">
    <location>
        <begin position="1026"/>
        <end position="1028"/>
    </location>
</feature>
<feature type="helix" evidence="20">
    <location>
        <begin position="1030"/>
        <end position="1038"/>
    </location>
</feature>
<feature type="helix" evidence="20">
    <location>
        <begin position="1040"/>
        <end position="1049"/>
    </location>
</feature>
<feature type="strand" evidence="20">
    <location>
        <begin position="1054"/>
        <end position="1058"/>
    </location>
</feature>
<feature type="turn" evidence="20">
    <location>
        <begin position="1059"/>
        <end position="1061"/>
    </location>
</feature>
<feature type="strand" evidence="20">
    <location>
        <begin position="1062"/>
        <end position="1065"/>
    </location>
</feature>
<feature type="helix" evidence="20">
    <location>
        <begin position="1068"/>
        <end position="1074"/>
    </location>
</feature>
<feature type="helix" evidence="20">
    <location>
        <begin position="1083"/>
        <end position="1094"/>
    </location>
</feature>
<feature type="helix" evidence="20">
    <location>
        <begin position="1101"/>
        <end position="1114"/>
    </location>
</feature>
<feature type="helix" evidence="20">
    <location>
        <begin position="1118"/>
        <end position="1126"/>
    </location>
</feature>
<feature type="helix" evidence="20">
    <location>
        <begin position="1129"/>
        <end position="1135"/>
    </location>
</feature>
<feature type="helix" evidence="20">
    <location>
        <begin position="1141"/>
        <end position="1147"/>
    </location>
</feature>
<feature type="helix" evidence="20">
    <location>
        <begin position="1150"/>
        <end position="1160"/>
    </location>
</feature>
<feature type="helix" evidence="20">
    <location>
        <begin position="1161"/>
        <end position="1165"/>
    </location>
</feature>
<feature type="helix" evidence="20">
    <location>
        <begin position="1174"/>
        <end position="1177"/>
    </location>
</feature>
<comment type="function">
    <text evidence="8">Associates with the adapter-like complex 4 (AP-4) and may therefore play a role in vesicular trafficking of proteins at the trans-Golgi network.</text>
</comment>
<comment type="subunit">
    <text evidence="6 8 9">Associated component of the adapter-like complex 4 (AP-4) (PubMed:30262884). Interacts with active RAB1A and RAB1B, and with GOLGA2 (PubMed:15796781). Interacts (via RUN domain) with RAB35 (GTP-bound form); the interaction recruits RUSC2 to the plasma membrane (PubMed:30905672).</text>
</comment>
<comment type="subcellular location">
    <subcellularLocation>
        <location evidence="6">Cytoplasm</location>
        <location evidence="6">Cytosol</location>
    </subcellularLocation>
    <subcellularLocation>
        <location evidence="9">Cell membrane</location>
    </subcellularLocation>
    <text evidence="6 9">Cytosolic punctate distribution. Also observed in the perinuclear region. Colocalizes with RAB35 at the membrane protrusions of HEK293T cells (PubMed:30905672).</text>
</comment>
<comment type="tissue specificity">
    <text evidence="6">Widely expressed, with highest levels in brain and testis.</text>
</comment>
<comment type="domain">
    <text evidence="6 9">The RUN domain is required for the interaction with RAB1A, RAB1B and RAB35.</text>
</comment>
<comment type="disease" evidence="7">
    <disease id="DI-05133">
        <name>Intellectual developmental disorder, autosomal recessive 61</name>
        <acronym>MRT61</acronym>
        <description>A disorder characterized by significantly below average general intellectual functioning associated with impairments in adaptive behavior and manifested during the developmental period. MRT61 patients manifest delayed psychomotor development, moderate to severe intellectual disability, and variable dysmorphic facial features. Refractory seizures and brain abnormalities are present in severely affected patients.</description>
        <dbReference type="MIM" id="617773"/>
    </disease>
    <text>The disease is caused by variants affecting the gene represented in this entry.</text>
</comment>
<comment type="sequence caution" evidence="14">
    <conflict type="erroneous initiation">
        <sequence resource="EMBL-CDS" id="BAA20830"/>
    </conflict>
    <text>Extended N-terminus.</text>
</comment>
<name>RUSC2_HUMAN</name>
<accession>Q8N2Y8</accession>
<accession>A2RU62</accession>
<accession>A7E2A9</accession>
<accession>O15080</accession>
<accession>Q5W134</accession>
<accession>Q641Q6</accession>
<accession>Q6P1W7</accession>
<evidence type="ECO:0000255" key="1">
    <source>
        <dbReference type="PROSITE-ProRule" id="PRU00178"/>
    </source>
</evidence>
<evidence type="ECO:0000255" key="2">
    <source>
        <dbReference type="PROSITE-ProRule" id="PRU00192"/>
    </source>
</evidence>
<evidence type="ECO:0000256" key="3">
    <source>
        <dbReference type="SAM" id="MobiDB-lite"/>
    </source>
</evidence>
<evidence type="ECO:0000269" key="4">
    <source>
    </source>
</evidence>
<evidence type="ECO:0000269" key="5">
    <source>
    </source>
</evidence>
<evidence type="ECO:0000269" key="6">
    <source>
    </source>
</evidence>
<evidence type="ECO:0000269" key="7">
    <source>
    </source>
</evidence>
<evidence type="ECO:0000269" key="8">
    <source>
    </source>
</evidence>
<evidence type="ECO:0000269" key="9">
    <source>
    </source>
</evidence>
<evidence type="ECO:0000269" key="10">
    <source>
    </source>
</evidence>
<evidence type="ECO:0000303" key="11">
    <source>
    </source>
</evidence>
<evidence type="ECO:0000303" key="12">
    <source>
    </source>
</evidence>
<evidence type="ECO:0000303" key="13">
    <source>
    </source>
</evidence>
<evidence type="ECO:0000305" key="14"/>
<evidence type="ECO:0000312" key="15">
    <source>
        <dbReference type="HGNC" id="HGNC:23625"/>
    </source>
</evidence>
<evidence type="ECO:0007744" key="16">
    <source>
    </source>
</evidence>
<evidence type="ECO:0007744" key="17">
    <source>
    </source>
</evidence>
<evidence type="ECO:0007744" key="18">
    <source>
    </source>
</evidence>
<evidence type="ECO:0007744" key="19">
    <source>
    </source>
</evidence>
<evidence type="ECO:0007829" key="20">
    <source>
        <dbReference type="PDB" id="6IF2"/>
    </source>
</evidence>
<keyword id="KW-0002">3D-structure</keyword>
<keyword id="KW-1003">Cell membrane</keyword>
<keyword id="KW-0963">Cytoplasm</keyword>
<keyword id="KW-0225">Disease variant</keyword>
<keyword id="KW-0991">Intellectual disability</keyword>
<keyword id="KW-0472">Membrane</keyword>
<keyword id="KW-0597">Phosphoprotein</keyword>
<keyword id="KW-1267">Proteomics identification</keyword>
<keyword id="KW-1185">Reference proteome</keyword>
<keyword id="KW-0728">SH3 domain</keyword>
<reference key="1">
    <citation type="journal article" date="1997" name="DNA Res.">
        <title>Prediction of the coding sequences of unidentified human genes. VII. The complete sequences of 100 new cDNA clones from brain which can code for large proteins in vitro.</title>
        <authorList>
            <person name="Nagase T."/>
            <person name="Ishikawa K."/>
            <person name="Nakajima D."/>
            <person name="Ohira M."/>
            <person name="Seki N."/>
            <person name="Miyajima N."/>
            <person name="Tanaka A."/>
            <person name="Kotani H."/>
            <person name="Nomura N."/>
            <person name="Ohara O."/>
        </authorList>
    </citation>
    <scope>NUCLEOTIDE SEQUENCE [LARGE SCALE MRNA]</scope>
    <scope>VARIANT ALA-73</scope>
    <source>
        <tissue>Brain</tissue>
    </source>
</reference>
<reference key="2">
    <citation type="journal article" date="2004" name="Nature">
        <title>DNA sequence and analysis of human chromosome 9.</title>
        <authorList>
            <person name="Humphray S.J."/>
            <person name="Oliver K."/>
            <person name="Hunt A.R."/>
            <person name="Plumb R.W."/>
            <person name="Loveland J.E."/>
            <person name="Howe K.L."/>
            <person name="Andrews T.D."/>
            <person name="Searle S."/>
            <person name="Hunt S.E."/>
            <person name="Scott C.E."/>
            <person name="Jones M.C."/>
            <person name="Ainscough R."/>
            <person name="Almeida J.P."/>
            <person name="Ambrose K.D."/>
            <person name="Ashwell R.I.S."/>
            <person name="Babbage A.K."/>
            <person name="Babbage S."/>
            <person name="Bagguley C.L."/>
            <person name="Bailey J."/>
            <person name="Banerjee R."/>
            <person name="Barker D.J."/>
            <person name="Barlow K.F."/>
            <person name="Bates K."/>
            <person name="Beasley H."/>
            <person name="Beasley O."/>
            <person name="Bird C.P."/>
            <person name="Bray-Allen S."/>
            <person name="Brown A.J."/>
            <person name="Brown J.Y."/>
            <person name="Burford D."/>
            <person name="Burrill W."/>
            <person name="Burton J."/>
            <person name="Carder C."/>
            <person name="Carter N.P."/>
            <person name="Chapman J.C."/>
            <person name="Chen Y."/>
            <person name="Clarke G."/>
            <person name="Clark S.Y."/>
            <person name="Clee C.M."/>
            <person name="Clegg S."/>
            <person name="Collier R.E."/>
            <person name="Corby N."/>
            <person name="Crosier M."/>
            <person name="Cummings A.T."/>
            <person name="Davies J."/>
            <person name="Dhami P."/>
            <person name="Dunn M."/>
            <person name="Dutta I."/>
            <person name="Dyer L.W."/>
            <person name="Earthrowl M.E."/>
            <person name="Faulkner L."/>
            <person name="Fleming C.J."/>
            <person name="Frankish A."/>
            <person name="Frankland J.A."/>
            <person name="French L."/>
            <person name="Fricker D.G."/>
            <person name="Garner P."/>
            <person name="Garnett J."/>
            <person name="Ghori J."/>
            <person name="Gilbert J.G.R."/>
            <person name="Glison C."/>
            <person name="Grafham D.V."/>
            <person name="Gribble S."/>
            <person name="Griffiths C."/>
            <person name="Griffiths-Jones S."/>
            <person name="Grocock R."/>
            <person name="Guy J."/>
            <person name="Hall R.E."/>
            <person name="Hammond S."/>
            <person name="Harley J.L."/>
            <person name="Harrison E.S.I."/>
            <person name="Hart E.A."/>
            <person name="Heath P.D."/>
            <person name="Henderson C.D."/>
            <person name="Hopkins B.L."/>
            <person name="Howard P.J."/>
            <person name="Howden P.J."/>
            <person name="Huckle E."/>
            <person name="Johnson C."/>
            <person name="Johnson D."/>
            <person name="Joy A.A."/>
            <person name="Kay M."/>
            <person name="Keenan S."/>
            <person name="Kershaw J.K."/>
            <person name="Kimberley A.M."/>
            <person name="King A."/>
            <person name="Knights A."/>
            <person name="Laird G.K."/>
            <person name="Langford C."/>
            <person name="Lawlor S."/>
            <person name="Leongamornlert D.A."/>
            <person name="Leversha M."/>
            <person name="Lloyd C."/>
            <person name="Lloyd D.M."/>
            <person name="Lovell J."/>
            <person name="Martin S."/>
            <person name="Mashreghi-Mohammadi M."/>
            <person name="Matthews L."/>
            <person name="McLaren S."/>
            <person name="McLay K.E."/>
            <person name="McMurray A."/>
            <person name="Milne S."/>
            <person name="Nickerson T."/>
            <person name="Nisbett J."/>
            <person name="Nordsiek G."/>
            <person name="Pearce A.V."/>
            <person name="Peck A.I."/>
            <person name="Porter K.M."/>
            <person name="Pandian R."/>
            <person name="Pelan S."/>
            <person name="Phillimore B."/>
            <person name="Povey S."/>
            <person name="Ramsey Y."/>
            <person name="Rand V."/>
            <person name="Scharfe M."/>
            <person name="Sehra H.K."/>
            <person name="Shownkeen R."/>
            <person name="Sims S.K."/>
            <person name="Skuce C.D."/>
            <person name="Smith M."/>
            <person name="Steward C.A."/>
            <person name="Swarbreck D."/>
            <person name="Sycamore N."/>
            <person name="Tester J."/>
            <person name="Thorpe A."/>
            <person name="Tracey A."/>
            <person name="Tromans A."/>
            <person name="Thomas D.W."/>
            <person name="Wall M."/>
            <person name="Wallis J.M."/>
            <person name="West A.P."/>
            <person name="Whitehead S.L."/>
            <person name="Willey D.L."/>
            <person name="Williams S.A."/>
            <person name="Wilming L."/>
            <person name="Wray P.W."/>
            <person name="Young L."/>
            <person name="Ashurst J.L."/>
            <person name="Coulson A."/>
            <person name="Blocker H."/>
            <person name="Durbin R.M."/>
            <person name="Sulston J.E."/>
            <person name="Hubbard T."/>
            <person name="Jackson M.J."/>
            <person name="Bentley D.R."/>
            <person name="Beck S."/>
            <person name="Rogers J."/>
            <person name="Dunham I."/>
        </authorList>
    </citation>
    <scope>NUCLEOTIDE SEQUENCE [LARGE SCALE GENOMIC DNA]</scope>
    <scope>VARIANT ALA-73</scope>
</reference>
<reference key="3">
    <citation type="submission" date="2005-09" db="EMBL/GenBank/DDBJ databases">
        <authorList>
            <person name="Mural R.J."/>
            <person name="Istrail S."/>
            <person name="Sutton G.G."/>
            <person name="Florea L."/>
            <person name="Halpern A.L."/>
            <person name="Mobarry C.M."/>
            <person name="Lippert R."/>
            <person name="Walenz B."/>
            <person name="Shatkay H."/>
            <person name="Dew I."/>
            <person name="Miller J.R."/>
            <person name="Flanigan M.J."/>
            <person name="Edwards N.J."/>
            <person name="Bolanos R."/>
            <person name="Fasulo D."/>
            <person name="Halldorsson B.V."/>
            <person name="Hannenhalli S."/>
            <person name="Turner R."/>
            <person name="Yooseph S."/>
            <person name="Lu F."/>
            <person name="Nusskern D.R."/>
            <person name="Shue B.C."/>
            <person name="Zheng X.H."/>
            <person name="Zhong F."/>
            <person name="Delcher A.L."/>
            <person name="Huson D.H."/>
            <person name="Kravitz S.A."/>
            <person name="Mouchard L."/>
            <person name="Reinert K."/>
            <person name="Remington K.A."/>
            <person name="Clark A.G."/>
            <person name="Waterman M.S."/>
            <person name="Eichler E.E."/>
            <person name="Adams M.D."/>
            <person name="Hunkapiller M.W."/>
            <person name="Myers E.W."/>
            <person name="Venter J.C."/>
        </authorList>
    </citation>
    <scope>NUCLEOTIDE SEQUENCE [LARGE SCALE GENOMIC DNA]</scope>
</reference>
<reference key="4">
    <citation type="journal article" date="2004" name="Genome Res.">
        <title>The status, quality, and expansion of the NIH full-length cDNA project: the Mammalian Gene Collection (MGC).</title>
        <authorList>
            <consortium name="The MGC Project Team"/>
        </authorList>
    </citation>
    <scope>NUCLEOTIDE SEQUENCE [LARGE SCALE MRNA]</scope>
    <scope>VARIANT ALA-73</scope>
    <source>
        <tissue>PNS</tissue>
        <tissue>Skin</tissue>
    </source>
</reference>
<reference key="5">
    <citation type="journal article" date="2005" name="BMC Cell Biol.">
        <title>Identification and characterization of Iporin as a novel interaction partner for rab1.</title>
        <authorList>
            <person name="Bayer M."/>
            <person name="Fischer J."/>
            <person name="Kremerskothen J."/>
            <person name="Ossendorf E."/>
            <person name="Matanis T."/>
            <person name="Konczal M."/>
            <person name="Weide T."/>
            <person name="Barnekow A."/>
        </authorList>
    </citation>
    <scope>SUBCELLULAR LOCATION</scope>
    <scope>TISSUE SPECIFICITY</scope>
    <scope>INTERACTION WITH RAB1A; RAB1B AND GOLGA2</scope>
</reference>
<reference key="6">
    <citation type="journal article" date="2006" name="Cell">
        <title>Global, in vivo, and site-specific phosphorylation dynamics in signaling networks.</title>
        <authorList>
            <person name="Olsen J.V."/>
            <person name="Blagoev B."/>
            <person name="Gnad F."/>
            <person name="Macek B."/>
            <person name="Kumar C."/>
            <person name="Mortensen P."/>
            <person name="Mann M."/>
        </authorList>
    </citation>
    <scope>PHOSPHORYLATION [LARGE SCALE ANALYSIS] AT SER-536</scope>
    <scope>IDENTIFICATION BY MASS SPECTROMETRY [LARGE SCALE ANALYSIS]</scope>
    <source>
        <tissue>Cervix carcinoma</tissue>
    </source>
</reference>
<reference key="7">
    <citation type="journal article" date="2008" name="J. Proteome Res.">
        <title>Combining protein-based IMAC, peptide-based IMAC, and MudPIT for efficient phosphoproteomic analysis.</title>
        <authorList>
            <person name="Cantin G.T."/>
            <person name="Yi W."/>
            <person name="Lu B."/>
            <person name="Park S.K."/>
            <person name="Xu T."/>
            <person name="Lee J.-D."/>
            <person name="Yates J.R. III"/>
        </authorList>
    </citation>
    <scope>PHOSPHORYLATION [LARGE SCALE ANALYSIS] AT SER-536</scope>
    <scope>IDENTIFICATION BY MASS SPECTROMETRY [LARGE SCALE ANALYSIS]</scope>
    <source>
        <tissue>Cervix carcinoma</tissue>
    </source>
</reference>
<reference key="8">
    <citation type="journal article" date="2008" name="Proc. Natl. Acad. Sci. U.S.A.">
        <title>A quantitative atlas of mitotic phosphorylation.</title>
        <authorList>
            <person name="Dephoure N."/>
            <person name="Zhou C."/>
            <person name="Villen J."/>
            <person name="Beausoleil S.A."/>
            <person name="Bakalarski C.E."/>
            <person name="Elledge S.J."/>
            <person name="Gygi S.P."/>
        </authorList>
    </citation>
    <scope>PHOSPHORYLATION [LARGE SCALE ANALYSIS] AT SER-536; SER-656; SER-1368 AND SER-1380</scope>
    <scope>IDENTIFICATION BY MASS SPECTROMETRY [LARGE SCALE ANALYSIS]</scope>
    <source>
        <tissue>Cervix carcinoma</tissue>
    </source>
</reference>
<reference key="9">
    <citation type="journal article" date="2013" name="J. Proteome Res.">
        <title>Toward a comprehensive characterization of a human cancer cell phosphoproteome.</title>
        <authorList>
            <person name="Zhou H."/>
            <person name="Di Palma S."/>
            <person name="Preisinger C."/>
            <person name="Peng M."/>
            <person name="Polat A.N."/>
            <person name="Heck A.J."/>
            <person name="Mohammed S."/>
        </authorList>
    </citation>
    <scope>PHOSPHORYLATION [LARGE SCALE ANALYSIS] AT SER-536; SER-543; SER-559 AND SER-781</scope>
    <scope>IDENTIFICATION BY MASS SPECTROMETRY [LARGE SCALE ANALYSIS]</scope>
    <source>
        <tissue>Cervix carcinoma</tissue>
        <tissue>Erythroleukemia</tissue>
    </source>
</reference>
<reference key="10">
    <citation type="journal article" date="2016" name="Dev. Med. Child. Neurol.">
        <title>Loss-of-function mutation in RUSC2 causes intellectual disability and secondary microcephaly.</title>
        <authorList>
            <person name="Alwadei A.H."/>
            <person name="Benini R."/>
            <person name="Mahmoud A."/>
            <person name="Alasmari A."/>
            <person name="Kamsteeg E.J."/>
            <person name="Alfadhel M."/>
        </authorList>
    </citation>
    <scope>INVOLVEMENT IN MRT61</scope>
    <scope>VARIANTS MRT61 866-ARG--ASN-1516 DEL AND 1318-ARG--ASN-1516 DEL</scope>
</reference>
<reference key="11">
    <citation type="journal article" date="2018" name="Nat. Commun.">
        <title>AP-4 vesicles contribute to spatial control of autophagy via RUSC-dependent peripheral delivery of ATG9A.</title>
        <authorList>
            <person name="Davies A.K."/>
            <person name="Itzhak D.N."/>
            <person name="Edgar J.R."/>
            <person name="Archuleta T.L."/>
            <person name="Hirst J."/>
            <person name="Jackson L.P."/>
            <person name="Robinson M.S."/>
            <person name="Borner G.H.H."/>
        </authorList>
    </citation>
    <scope>FUNCTION</scope>
    <scope>IDENTIFICATION IN THE AP-4 COMPLEX</scope>
</reference>
<reference key="12">
    <citation type="journal article" date="2019" name="Structure">
        <title>Rab35/ACAP2 and Rab35/RUSC2 Complex Structures Reveal Molecular Basis for Effector Recognition by Rab35 GTPase.</title>
        <authorList>
            <person name="Lin L."/>
            <person name="Shi Y."/>
            <person name="Wang M."/>
            <person name="Wang C."/>
            <person name="Zhu J."/>
            <person name="Zhang R."/>
        </authorList>
    </citation>
    <scope>INTERACTION WITH RAB35</scope>
    <scope>DOMAIN</scope>
    <scope>MUTAGENESIS OF ASP-1005; ARG-1015; GLU-1119; GLU-1155; LEU-1158 AND GLN-1161</scope>
    <scope>SUBCELLULAR LOCATION</scope>
</reference>
<proteinExistence type="evidence at protein level"/>
<organism>
    <name type="scientific">Homo sapiens</name>
    <name type="common">Human</name>
    <dbReference type="NCBI Taxonomy" id="9606"/>
    <lineage>
        <taxon>Eukaryota</taxon>
        <taxon>Metazoa</taxon>
        <taxon>Chordata</taxon>
        <taxon>Craniata</taxon>
        <taxon>Vertebrata</taxon>
        <taxon>Euteleostomi</taxon>
        <taxon>Mammalia</taxon>
        <taxon>Eutheria</taxon>
        <taxon>Euarchontoglires</taxon>
        <taxon>Primates</taxon>
        <taxon>Haplorrhini</taxon>
        <taxon>Catarrhini</taxon>
        <taxon>Hominidae</taxon>
        <taxon>Homo</taxon>
    </lineage>
</organism>